<evidence type="ECO:0000255" key="1">
    <source>
        <dbReference type="HAMAP-Rule" id="MF_00691"/>
    </source>
</evidence>
<name>PXPA_ESCF3</name>
<feature type="chain" id="PRO_1000132059" description="5-oxoprolinase subunit A">
    <location>
        <begin position="1"/>
        <end position="244"/>
    </location>
</feature>
<comment type="function">
    <text evidence="1">Catalyzes the cleavage of 5-oxoproline to form L-glutamate coupled to the hydrolysis of ATP to ADP and inorganic phosphate.</text>
</comment>
<comment type="catalytic activity">
    <reaction evidence="1">
        <text>5-oxo-L-proline + ATP + 2 H2O = L-glutamate + ADP + phosphate + H(+)</text>
        <dbReference type="Rhea" id="RHEA:10348"/>
        <dbReference type="ChEBI" id="CHEBI:15377"/>
        <dbReference type="ChEBI" id="CHEBI:15378"/>
        <dbReference type="ChEBI" id="CHEBI:29985"/>
        <dbReference type="ChEBI" id="CHEBI:30616"/>
        <dbReference type="ChEBI" id="CHEBI:43474"/>
        <dbReference type="ChEBI" id="CHEBI:58402"/>
        <dbReference type="ChEBI" id="CHEBI:456216"/>
        <dbReference type="EC" id="3.5.2.9"/>
    </reaction>
</comment>
<comment type="subunit">
    <text evidence="1">Forms a complex composed of PxpA, PxpB and PxpC.</text>
</comment>
<comment type="similarity">
    <text evidence="1">Belongs to the LamB/PxpA family.</text>
</comment>
<protein>
    <recommendedName>
        <fullName evidence="1">5-oxoprolinase subunit A</fullName>
        <shortName evidence="1">5-OPase subunit A</shortName>
        <ecNumber evidence="1">3.5.2.9</ecNumber>
    </recommendedName>
    <alternativeName>
        <fullName evidence="1">5-oxoprolinase (ATP-hydrolyzing) subunit A</fullName>
    </alternativeName>
</protein>
<sequence length="244" mass="25875">MKIDLNADLGEGCASDAELLTLVSSANIACGFHAGDAQTMQASVREAVKNGVAIGAHPGFPDRENFGRTAMQLPPETVYAQTLYQIGALAAITHAEGGVMRHVKPHGMLYNQAAKEPQLADAIAKAVHACDPALILVGLAGSELIRAGKHYGLTTRQEVFADRGYQADGSLVPRSQPGALIEDEEQSLAQTLEMVQNGRVKSITGEWTPVEAQTVCLHGDGEHALAFARRLRAAFLERGIAVQA</sequence>
<keyword id="KW-0067">ATP-binding</keyword>
<keyword id="KW-0378">Hydrolase</keyword>
<keyword id="KW-0547">Nucleotide-binding</keyword>
<proteinExistence type="inferred from homology"/>
<accession>B7LKQ8</accession>
<dbReference type="EC" id="3.5.2.9" evidence="1"/>
<dbReference type="EMBL" id="CU928158">
    <property type="protein sequence ID" value="CAQ89903.1"/>
    <property type="molecule type" value="Genomic_DNA"/>
</dbReference>
<dbReference type="RefSeq" id="WP_000687155.1">
    <property type="nucleotide sequence ID" value="NC_011740.1"/>
</dbReference>
<dbReference type="SMR" id="B7LKQ8"/>
<dbReference type="GeneID" id="75056564"/>
<dbReference type="KEGG" id="efe:EFER_2404"/>
<dbReference type="HOGENOM" id="CLU_069535_0_0_6"/>
<dbReference type="OrthoDB" id="9773478at2"/>
<dbReference type="Proteomes" id="UP000000745">
    <property type="component" value="Chromosome"/>
</dbReference>
<dbReference type="GO" id="GO:0017168">
    <property type="term" value="F:5-oxoprolinase (ATP-hydrolyzing) activity"/>
    <property type="evidence" value="ECO:0007669"/>
    <property type="project" value="UniProtKB-UniRule"/>
</dbReference>
<dbReference type="GO" id="GO:0005524">
    <property type="term" value="F:ATP binding"/>
    <property type="evidence" value="ECO:0007669"/>
    <property type="project" value="UniProtKB-UniRule"/>
</dbReference>
<dbReference type="GO" id="GO:0005975">
    <property type="term" value="P:carbohydrate metabolic process"/>
    <property type="evidence" value="ECO:0007669"/>
    <property type="project" value="InterPro"/>
</dbReference>
<dbReference type="CDD" id="cd10800">
    <property type="entry name" value="LamB_YcsF_YbgL_like"/>
    <property type="match status" value="1"/>
</dbReference>
<dbReference type="Gene3D" id="3.20.20.370">
    <property type="entry name" value="Glycoside hydrolase/deacetylase"/>
    <property type="match status" value="1"/>
</dbReference>
<dbReference type="HAMAP" id="MF_00691">
    <property type="entry name" value="PxpA"/>
    <property type="match status" value="1"/>
</dbReference>
<dbReference type="InterPro" id="IPR011330">
    <property type="entry name" value="Glyco_hydro/deAcase_b/a-brl"/>
</dbReference>
<dbReference type="InterPro" id="IPR005501">
    <property type="entry name" value="LamB/YcsF/PxpA-like"/>
</dbReference>
<dbReference type="NCBIfam" id="NF003812">
    <property type="entry name" value="PRK05406.1-1"/>
    <property type="match status" value="1"/>
</dbReference>
<dbReference type="NCBIfam" id="NF003814">
    <property type="entry name" value="PRK05406.1-3"/>
    <property type="match status" value="1"/>
</dbReference>
<dbReference type="NCBIfam" id="NF003815">
    <property type="entry name" value="PRK05406.1-4"/>
    <property type="match status" value="1"/>
</dbReference>
<dbReference type="NCBIfam" id="NF003816">
    <property type="entry name" value="PRK05406.1-5"/>
    <property type="match status" value="1"/>
</dbReference>
<dbReference type="PANTHER" id="PTHR30292:SF0">
    <property type="entry name" value="5-OXOPROLINASE SUBUNIT A"/>
    <property type="match status" value="1"/>
</dbReference>
<dbReference type="PANTHER" id="PTHR30292">
    <property type="entry name" value="UNCHARACTERIZED PROTEIN YBGL-RELATED"/>
    <property type="match status" value="1"/>
</dbReference>
<dbReference type="Pfam" id="PF03746">
    <property type="entry name" value="LamB_YcsF"/>
    <property type="match status" value="1"/>
</dbReference>
<dbReference type="SUPFAM" id="SSF88713">
    <property type="entry name" value="Glycoside hydrolase/deacetylase"/>
    <property type="match status" value="1"/>
</dbReference>
<reference key="1">
    <citation type="journal article" date="2009" name="PLoS Genet.">
        <title>Organised genome dynamics in the Escherichia coli species results in highly diverse adaptive paths.</title>
        <authorList>
            <person name="Touchon M."/>
            <person name="Hoede C."/>
            <person name="Tenaillon O."/>
            <person name="Barbe V."/>
            <person name="Baeriswyl S."/>
            <person name="Bidet P."/>
            <person name="Bingen E."/>
            <person name="Bonacorsi S."/>
            <person name="Bouchier C."/>
            <person name="Bouvet O."/>
            <person name="Calteau A."/>
            <person name="Chiapello H."/>
            <person name="Clermont O."/>
            <person name="Cruveiller S."/>
            <person name="Danchin A."/>
            <person name="Diard M."/>
            <person name="Dossat C."/>
            <person name="Karoui M.E."/>
            <person name="Frapy E."/>
            <person name="Garry L."/>
            <person name="Ghigo J.M."/>
            <person name="Gilles A.M."/>
            <person name="Johnson J."/>
            <person name="Le Bouguenec C."/>
            <person name="Lescat M."/>
            <person name="Mangenot S."/>
            <person name="Martinez-Jehanne V."/>
            <person name="Matic I."/>
            <person name="Nassif X."/>
            <person name="Oztas S."/>
            <person name="Petit M.A."/>
            <person name="Pichon C."/>
            <person name="Rouy Z."/>
            <person name="Ruf C.S."/>
            <person name="Schneider D."/>
            <person name="Tourret J."/>
            <person name="Vacherie B."/>
            <person name="Vallenet D."/>
            <person name="Medigue C."/>
            <person name="Rocha E.P.C."/>
            <person name="Denamur E."/>
        </authorList>
    </citation>
    <scope>NUCLEOTIDE SEQUENCE [LARGE SCALE GENOMIC DNA]</scope>
    <source>
        <strain>ATCC 35469 / DSM 13698 / BCRC 15582 / CCUG 18766 / IAM 14443 / JCM 21226 / LMG 7866 / NBRC 102419 / NCTC 12128 / CDC 0568-73</strain>
    </source>
</reference>
<gene>
    <name evidence="1" type="primary">pxpA</name>
    <name type="ordered locus">EFER_2404</name>
</gene>
<organism>
    <name type="scientific">Escherichia fergusonii (strain ATCC 35469 / DSM 13698 / CCUG 18766 / IAM 14443 / JCM 21226 / LMG 7866 / NBRC 102419 / NCTC 12128 / CDC 0568-73)</name>
    <dbReference type="NCBI Taxonomy" id="585054"/>
    <lineage>
        <taxon>Bacteria</taxon>
        <taxon>Pseudomonadati</taxon>
        <taxon>Pseudomonadota</taxon>
        <taxon>Gammaproteobacteria</taxon>
        <taxon>Enterobacterales</taxon>
        <taxon>Enterobacteriaceae</taxon>
        <taxon>Escherichia</taxon>
    </lineage>
</organism>